<name>CBSX6_ARATH</name>
<protein>
    <recommendedName>
        <fullName>CBS domain-containing protein CBSX6</fullName>
    </recommendedName>
</protein>
<gene>
    <name type="primary">CBSX6</name>
    <name type="ordered locus">At1g65320</name>
    <name type="ORF">T8F5.10</name>
</gene>
<organism>
    <name type="scientific">Arabidopsis thaliana</name>
    <name type="common">Mouse-ear cress</name>
    <dbReference type="NCBI Taxonomy" id="3702"/>
    <lineage>
        <taxon>Eukaryota</taxon>
        <taxon>Viridiplantae</taxon>
        <taxon>Streptophyta</taxon>
        <taxon>Embryophyta</taxon>
        <taxon>Tracheophyta</taxon>
        <taxon>Spermatophyta</taxon>
        <taxon>Magnoliopsida</taxon>
        <taxon>eudicotyledons</taxon>
        <taxon>Gunneridae</taxon>
        <taxon>Pentapetalae</taxon>
        <taxon>rosids</taxon>
        <taxon>malvids</taxon>
        <taxon>Brassicales</taxon>
        <taxon>Brassicaceae</taxon>
        <taxon>Camelineae</taxon>
        <taxon>Arabidopsis</taxon>
    </lineage>
</organism>
<reference key="1">
    <citation type="journal article" date="2000" name="Nature">
        <title>Sequence and analysis of chromosome 1 of the plant Arabidopsis thaliana.</title>
        <authorList>
            <person name="Theologis A."/>
            <person name="Ecker J.R."/>
            <person name="Palm C.J."/>
            <person name="Federspiel N.A."/>
            <person name="Kaul S."/>
            <person name="White O."/>
            <person name="Alonso J."/>
            <person name="Altafi H."/>
            <person name="Araujo R."/>
            <person name="Bowman C.L."/>
            <person name="Brooks S.Y."/>
            <person name="Buehler E."/>
            <person name="Chan A."/>
            <person name="Chao Q."/>
            <person name="Chen H."/>
            <person name="Cheuk R.F."/>
            <person name="Chin C.W."/>
            <person name="Chung M.K."/>
            <person name="Conn L."/>
            <person name="Conway A.B."/>
            <person name="Conway A.R."/>
            <person name="Creasy T.H."/>
            <person name="Dewar K."/>
            <person name="Dunn P."/>
            <person name="Etgu P."/>
            <person name="Feldblyum T.V."/>
            <person name="Feng J.-D."/>
            <person name="Fong B."/>
            <person name="Fujii C.Y."/>
            <person name="Gill J.E."/>
            <person name="Goldsmith A.D."/>
            <person name="Haas B."/>
            <person name="Hansen N.F."/>
            <person name="Hughes B."/>
            <person name="Huizar L."/>
            <person name="Hunter J.L."/>
            <person name="Jenkins J."/>
            <person name="Johnson-Hopson C."/>
            <person name="Khan S."/>
            <person name="Khaykin E."/>
            <person name="Kim C.J."/>
            <person name="Koo H.L."/>
            <person name="Kremenetskaia I."/>
            <person name="Kurtz D.B."/>
            <person name="Kwan A."/>
            <person name="Lam B."/>
            <person name="Langin-Hooper S."/>
            <person name="Lee A."/>
            <person name="Lee J.M."/>
            <person name="Lenz C.A."/>
            <person name="Li J.H."/>
            <person name="Li Y.-P."/>
            <person name="Lin X."/>
            <person name="Liu S.X."/>
            <person name="Liu Z.A."/>
            <person name="Luros J.S."/>
            <person name="Maiti R."/>
            <person name="Marziali A."/>
            <person name="Militscher J."/>
            <person name="Miranda M."/>
            <person name="Nguyen M."/>
            <person name="Nierman W.C."/>
            <person name="Osborne B.I."/>
            <person name="Pai G."/>
            <person name="Peterson J."/>
            <person name="Pham P.K."/>
            <person name="Rizzo M."/>
            <person name="Rooney T."/>
            <person name="Rowley D."/>
            <person name="Sakano H."/>
            <person name="Salzberg S.L."/>
            <person name="Schwartz J.R."/>
            <person name="Shinn P."/>
            <person name="Southwick A.M."/>
            <person name="Sun H."/>
            <person name="Tallon L.J."/>
            <person name="Tambunga G."/>
            <person name="Toriumi M.J."/>
            <person name="Town C.D."/>
            <person name="Utterback T."/>
            <person name="Van Aken S."/>
            <person name="Vaysberg M."/>
            <person name="Vysotskaia V.S."/>
            <person name="Walker M."/>
            <person name="Wu D."/>
            <person name="Yu G."/>
            <person name="Fraser C.M."/>
            <person name="Venter J.C."/>
            <person name="Davis R.W."/>
        </authorList>
    </citation>
    <scope>NUCLEOTIDE SEQUENCE [LARGE SCALE GENOMIC DNA]</scope>
    <source>
        <strain>cv. Columbia</strain>
    </source>
</reference>
<reference key="2">
    <citation type="journal article" date="2017" name="Plant J.">
        <title>Araport11: a complete reannotation of the Arabidopsis thaliana reference genome.</title>
        <authorList>
            <person name="Cheng C.Y."/>
            <person name="Krishnakumar V."/>
            <person name="Chan A.P."/>
            <person name="Thibaud-Nissen F."/>
            <person name="Schobel S."/>
            <person name="Town C.D."/>
        </authorList>
    </citation>
    <scope>GENOME REANNOTATION</scope>
    <source>
        <strain>cv. Columbia</strain>
    </source>
</reference>
<reference key="3">
    <citation type="journal article" date="2002" name="Science">
        <title>Functional annotation of a full-length Arabidopsis cDNA collection.</title>
        <authorList>
            <person name="Seki M."/>
            <person name="Narusaka M."/>
            <person name="Kamiya A."/>
            <person name="Ishida J."/>
            <person name="Satou M."/>
            <person name="Sakurai T."/>
            <person name="Nakajima M."/>
            <person name="Enju A."/>
            <person name="Akiyama K."/>
            <person name="Oono Y."/>
            <person name="Muramatsu M."/>
            <person name="Hayashizaki Y."/>
            <person name="Kawai J."/>
            <person name="Carninci P."/>
            <person name="Itoh M."/>
            <person name="Ishii Y."/>
            <person name="Arakawa T."/>
            <person name="Shibata K."/>
            <person name="Shinagawa A."/>
            <person name="Shinozaki K."/>
        </authorList>
    </citation>
    <scope>NUCLEOTIDE SEQUENCE [LARGE SCALE MRNA]</scope>
    <source>
        <strain>cv. Columbia</strain>
    </source>
</reference>
<reference key="4">
    <citation type="journal article" date="2009" name="BMC Genomics">
        <title>Genome wide expression analysis of CBS domain containing proteins in Arabidopsis thaliana (L.) Heynh and Oryza sativa L. reveals their developmental and stress regulation.</title>
        <authorList>
            <person name="Kushwaha H.R."/>
            <person name="Singh A.K."/>
            <person name="Sopory S.K."/>
            <person name="Singla-Pareek S.L."/>
            <person name="Pareek A."/>
        </authorList>
    </citation>
    <scope>GENE FAMILY</scope>
    <scope>NOMENCLATURE</scope>
</reference>
<reference key="5">
    <citation type="journal article" date="2009" name="J. Proteomics">
        <title>Phosphoproteomic analysis of nuclei-enriched fractions from Arabidopsis thaliana.</title>
        <authorList>
            <person name="Jones A.M.E."/>
            <person name="MacLean D."/>
            <person name="Studholme D.J."/>
            <person name="Serna-Sanz A."/>
            <person name="Andreasson E."/>
            <person name="Rathjen J.P."/>
            <person name="Peck S.C."/>
        </authorList>
    </citation>
    <scope>IDENTIFICATION BY MASS SPECTROMETRY [LARGE SCALE ANALYSIS]</scope>
    <source>
        <strain>cv. Columbia</strain>
    </source>
</reference>
<reference key="6">
    <citation type="journal article" date="2009" name="Plant Physiol.">
        <title>Large-scale Arabidopsis phosphoproteome profiling reveals novel chloroplast kinase substrates and phosphorylation networks.</title>
        <authorList>
            <person name="Reiland S."/>
            <person name="Messerli G."/>
            <person name="Baerenfaller K."/>
            <person name="Gerrits B."/>
            <person name="Endler A."/>
            <person name="Grossmann J."/>
            <person name="Gruissem W."/>
            <person name="Baginsky S."/>
        </authorList>
    </citation>
    <scope>IDENTIFICATION BY MASS SPECTROMETRY [LARGE SCALE ANALYSIS]</scope>
</reference>
<dbReference type="EMBL" id="AC004512">
    <property type="protein sequence ID" value="AAC27143.1"/>
    <property type="status" value="ALT_SEQ"/>
    <property type="molecule type" value="Genomic_DNA"/>
</dbReference>
<dbReference type="EMBL" id="CP002684">
    <property type="protein sequence ID" value="AEE34358.1"/>
    <property type="molecule type" value="Genomic_DNA"/>
</dbReference>
<dbReference type="EMBL" id="AK117112">
    <property type="protein sequence ID" value="BAC41791.1"/>
    <property type="molecule type" value="mRNA"/>
</dbReference>
<dbReference type="PIR" id="T02355">
    <property type="entry name" value="T02355"/>
</dbReference>
<dbReference type="RefSeq" id="NP_176711.1">
    <property type="nucleotide sequence ID" value="NM_105206.3"/>
</dbReference>
<dbReference type="FunCoup" id="Q8GZA4">
    <property type="interactions" value="1787"/>
</dbReference>
<dbReference type="STRING" id="3702.Q8GZA4"/>
<dbReference type="iPTMnet" id="Q8GZA4"/>
<dbReference type="PaxDb" id="3702-AT1G65320.1"/>
<dbReference type="ProteomicsDB" id="223930"/>
<dbReference type="EnsemblPlants" id="AT1G65320.1">
    <property type="protein sequence ID" value="AT1G65320.1"/>
    <property type="gene ID" value="AT1G65320"/>
</dbReference>
<dbReference type="GeneID" id="842840"/>
<dbReference type="Gramene" id="AT1G65320.1">
    <property type="protein sequence ID" value="AT1G65320.1"/>
    <property type="gene ID" value="AT1G65320"/>
</dbReference>
<dbReference type="KEGG" id="ath:AT1G65320"/>
<dbReference type="Araport" id="AT1G65320"/>
<dbReference type="TAIR" id="AT1G65320">
    <property type="gene designation" value="CBSX6"/>
</dbReference>
<dbReference type="eggNOG" id="KOG1764">
    <property type="taxonomic scope" value="Eukaryota"/>
</dbReference>
<dbReference type="HOGENOM" id="CLU_056468_0_0_1"/>
<dbReference type="InParanoid" id="Q8GZA4"/>
<dbReference type="OMA" id="SVAWKGM"/>
<dbReference type="PhylomeDB" id="Q8GZA4"/>
<dbReference type="PRO" id="PR:Q8GZA4"/>
<dbReference type="Proteomes" id="UP000006548">
    <property type="component" value="Chromosome 1"/>
</dbReference>
<dbReference type="ExpressionAtlas" id="Q8GZA4">
    <property type="expression patterns" value="baseline and differential"/>
</dbReference>
<dbReference type="GO" id="GO:0005634">
    <property type="term" value="C:nucleus"/>
    <property type="evidence" value="ECO:0007005"/>
    <property type="project" value="TAIR"/>
</dbReference>
<dbReference type="GO" id="GO:0000325">
    <property type="term" value="C:plant-type vacuole"/>
    <property type="evidence" value="ECO:0007005"/>
    <property type="project" value="TAIR"/>
</dbReference>
<dbReference type="GO" id="GO:0005774">
    <property type="term" value="C:vacuolar membrane"/>
    <property type="evidence" value="ECO:0007669"/>
    <property type="project" value="UniProtKB-SubCell"/>
</dbReference>
<dbReference type="CDD" id="cd02205">
    <property type="entry name" value="CBS_pair_SF"/>
    <property type="match status" value="1"/>
</dbReference>
<dbReference type="Gene3D" id="3.10.580.10">
    <property type="entry name" value="CBS-domain"/>
    <property type="match status" value="1"/>
</dbReference>
<dbReference type="InterPro" id="IPR050511">
    <property type="entry name" value="AMPK_gamma/SDS23_families"/>
</dbReference>
<dbReference type="InterPro" id="IPR000644">
    <property type="entry name" value="CBS_dom"/>
</dbReference>
<dbReference type="InterPro" id="IPR046342">
    <property type="entry name" value="CBS_dom_sf"/>
</dbReference>
<dbReference type="PANTHER" id="PTHR13780">
    <property type="entry name" value="AMP-ACTIVATED PROTEIN KINASE, GAMMA REGULATORY SUBUNIT"/>
    <property type="match status" value="1"/>
</dbReference>
<dbReference type="PANTHER" id="PTHR13780:SF46">
    <property type="entry name" value="CBS DOMAIN-CONTAINING PROTEIN CBSX6"/>
    <property type="match status" value="1"/>
</dbReference>
<dbReference type="Pfam" id="PF00571">
    <property type="entry name" value="CBS"/>
    <property type="match status" value="1"/>
</dbReference>
<dbReference type="SUPFAM" id="SSF54631">
    <property type="entry name" value="CBS-domain pair"/>
    <property type="match status" value="2"/>
</dbReference>
<dbReference type="PROSITE" id="PS51371">
    <property type="entry name" value="CBS"/>
    <property type="match status" value="2"/>
</dbReference>
<keyword id="KW-0129">CBS domain</keyword>
<keyword id="KW-0472">Membrane</keyword>
<keyword id="KW-1185">Reference proteome</keyword>
<keyword id="KW-0677">Repeat</keyword>
<keyword id="KW-0812">Transmembrane</keyword>
<keyword id="KW-1133">Transmembrane helix</keyword>
<keyword id="KW-0926">Vacuole</keyword>
<sequence>MASVFLYHVVGDLTVGKPEMVEFYETETVESAIRAIGESTECGIPVWRKRTTPSLPGFVENSEMRQQRFVGILNSLDIVAFLAKTECLQEEKAMKIPVSEVVSPDNTLLKQVDPGTRLIDALEMMKQGVRRLLVPKSVVWRGMSKRFSILYNGKWLKNSENSSSSSGLSADSTNRPTTSMTSSRDKFCCLSREDVIRFLIGVLGALAPLPLTSISTLGIINQNYNFIEASLPAIEATRRPLCDPSAIAVLEQTENEQQFKIIGEISASKLWKCDYLAAAWALANLYAGQFVMGVEDNMSSRSFSDFLQTSFPGGEQNGTATNAKKFSSRSIGFNPTSPTRLSIGRSMYRGRSAPLTCKTSSSLAAVMAQMLSHRATHVWVTEADSDDVLVGVVGYGEILTAVTKQPSAFVPSNRSYEGFGNENQS</sequence>
<proteinExistence type="evidence at protein level"/>
<evidence type="ECO:0000255" key="1"/>
<evidence type="ECO:0000255" key="2">
    <source>
        <dbReference type="PROSITE-ProRule" id="PRU00703"/>
    </source>
</evidence>
<evidence type="ECO:0000256" key="3">
    <source>
        <dbReference type="SAM" id="MobiDB-lite"/>
    </source>
</evidence>
<evidence type="ECO:0000305" key="4"/>
<comment type="subcellular location">
    <subcellularLocation>
        <location evidence="4">Vacuole membrane</location>
        <topology evidence="4">Multi-pass membrane protein</topology>
    </subcellularLocation>
</comment>
<comment type="sequence caution" evidence="4">
    <conflict type="erroneous gene model prediction">
        <sequence resource="EMBL-CDS" id="AAC27143"/>
    </conflict>
</comment>
<feature type="chain" id="PRO_0000403991" description="CBS domain-containing protein CBSX6">
    <location>
        <begin position="1"/>
        <end position="425"/>
    </location>
</feature>
<feature type="transmembrane region" description="Helical" evidence="1">
    <location>
        <begin position="200"/>
        <end position="220"/>
    </location>
</feature>
<feature type="transmembrane region" description="Helical" evidence="1">
    <location>
        <begin position="275"/>
        <end position="295"/>
    </location>
</feature>
<feature type="domain" description="CBS 1" evidence="2">
    <location>
        <begin position="16"/>
        <end position="90"/>
    </location>
</feature>
<feature type="domain" description="CBS 2" evidence="2">
    <location>
        <begin position="347"/>
        <end position="409"/>
    </location>
</feature>
<feature type="region of interest" description="Disordered" evidence="3">
    <location>
        <begin position="159"/>
        <end position="182"/>
    </location>
</feature>
<feature type="compositionally biased region" description="Low complexity" evidence="3">
    <location>
        <begin position="159"/>
        <end position="172"/>
    </location>
</feature>
<feature type="compositionally biased region" description="Polar residues" evidence="3">
    <location>
        <begin position="173"/>
        <end position="182"/>
    </location>
</feature>
<accession>Q8GZA4</accession>
<accession>O80804</accession>